<organism>
    <name type="scientific">Arabidopsis thaliana</name>
    <name type="common">Mouse-ear cress</name>
    <dbReference type="NCBI Taxonomy" id="3702"/>
    <lineage>
        <taxon>Eukaryota</taxon>
        <taxon>Viridiplantae</taxon>
        <taxon>Streptophyta</taxon>
        <taxon>Embryophyta</taxon>
        <taxon>Tracheophyta</taxon>
        <taxon>Spermatophyta</taxon>
        <taxon>Magnoliopsida</taxon>
        <taxon>eudicotyledons</taxon>
        <taxon>Gunneridae</taxon>
        <taxon>Pentapetalae</taxon>
        <taxon>rosids</taxon>
        <taxon>malvids</taxon>
        <taxon>Brassicales</taxon>
        <taxon>Brassicaceae</taxon>
        <taxon>Camelineae</taxon>
        <taxon>Arabidopsis</taxon>
    </lineage>
</organism>
<gene>
    <name type="primary">DAR3</name>
    <name type="ordered locus">At5g66640</name>
    <name type="ORF">MSN2.2</name>
</gene>
<keyword id="KW-0025">Alternative splicing</keyword>
<keyword id="KW-0175">Coiled coil</keyword>
<keyword id="KW-1185">Reference proteome</keyword>
<reference key="1">
    <citation type="journal article" date="2000" name="DNA Res.">
        <title>Structural analysis of Arabidopsis thaliana chromosome 5. X. Sequence features of the regions of 3,076,755 bp covered by sixty P1 and TAC clones.</title>
        <authorList>
            <person name="Sato S."/>
            <person name="Nakamura Y."/>
            <person name="Kaneko T."/>
            <person name="Katoh T."/>
            <person name="Asamizu E."/>
            <person name="Kotani H."/>
            <person name="Tabata S."/>
        </authorList>
    </citation>
    <scope>NUCLEOTIDE SEQUENCE [LARGE SCALE GENOMIC DNA]</scope>
    <source>
        <strain>cv. Columbia</strain>
    </source>
</reference>
<reference key="2">
    <citation type="journal article" date="2017" name="Plant J.">
        <title>Araport11: a complete reannotation of the Arabidopsis thaliana reference genome.</title>
        <authorList>
            <person name="Cheng C.Y."/>
            <person name="Krishnakumar V."/>
            <person name="Chan A.P."/>
            <person name="Thibaud-Nissen F."/>
            <person name="Schobel S."/>
            <person name="Town C.D."/>
        </authorList>
    </citation>
    <scope>GENOME REANNOTATION</scope>
    <source>
        <strain>cv. Columbia</strain>
    </source>
</reference>
<reference key="3">
    <citation type="journal article" date="2008" name="Genes Dev.">
        <title>Control of final seed and organ size by the DA1 gene family in Arabidopsis thaliana.</title>
        <authorList>
            <person name="Li Y."/>
            <person name="Zheng L."/>
            <person name="Corke F."/>
            <person name="Smith C."/>
            <person name="Bevan M.W."/>
        </authorList>
    </citation>
    <scope>GENE FAMILY</scope>
    <scope>NOMENCLATURE</scope>
</reference>
<accession>Q9LVR6</accession>
<sequence length="450" mass="51309">MVRRKRQEEDEKIEIERVKEESLKLAKQAEEKRRLEESKEQGKRIQVDDDQLAKTTSKDKGQINHSKDVVEEDVNPPPSIDGKSEIGDGTSVNPRCLCCFHCHRPFVMHEILKKGKFHIDCYKEYYRNRNCYVCQQKIPVNAEGIRKFSEHPFWKEKYCPIHDEDGTAKCCSCERLEPRGTNYVMLGDFRWLCIECMGSAVMDTNEVQPLHFEIREFFEGLFLKVDKEFALLLVEKQALNKAEEEEKIDYHRAAVTRGLCMSEEQIVPSIIKGPRMGPDNQLITDIVTESQRVSGFEVTGILIIYGLPRLLTGYILAHEMMHAWLRLNGYKNLKLELEEGLCQALGLRWLESQTFASTDAAAAAAVASSSSFSSSTAPPAAITSKKSDDWSIFEKKLVEFCMNQIKEDDSPVYGLGFKQVYEMMVSNNYNIKDTLKDIVSASNATPDSTV</sequence>
<proteinExistence type="predicted"/>
<evidence type="ECO:0000255" key="1"/>
<evidence type="ECO:0000256" key="2">
    <source>
        <dbReference type="SAM" id="MobiDB-lite"/>
    </source>
</evidence>
<evidence type="ECO:0000305" key="3"/>
<comment type="alternative products">
    <event type="alternative splicing"/>
    <isoform>
        <id>Q9LVR6-1</id>
        <name>1</name>
        <sequence type="displayed"/>
    </isoform>
    <text>A number of isoforms are produced. According to EST sequences.</text>
</comment>
<comment type="sequence caution" evidence="3">
    <conflict type="erroneous gene model prediction">
        <sequence resource="EMBL-CDS" id="BAA97270"/>
    </conflict>
</comment>
<feature type="chain" id="PRO_0000396938" description="Protein DA1-related 3">
    <location>
        <begin position="1"/>
        <end position="450"/>
    </location>
</feature>
<feature type="region of interest" description="Disordered" evidence="2">
    <location>
        <begin position="27"/>
        <end position="87"/>
    </location>
</feature>
<feature type="coiled-coil region" evidence="1">
    <location>
        <begin position="1"/>
        <end position="46"/>
    </location>
</feature>
<feature type="compositionally biased region" description="Basic and acidic residues" evidence="2">
    <location>
        <begin position="27"/>
        <end position="47"/>
    </location>
</feature>
<feature type="compositionally biased region" description="Basic and acidic residues" evidence="2">
    <location>
        <begin position="56"/>
        <end position="69"/>
    </location>
</feature>
<name>DAR3_ARATH</name>
<protein>
    <recommendedName>
        <fullName>Protein DA1-related 3</fullName>
    </recommendedName>
</protein>
<dbReference type="EMBL" id="AB018119">
    <property type="protein sequence ID" value="BAA97270.1"/>
    <property type="status" value="ALT_SEQ"/>
    <property type="molecule type" value="Genomic_DNA"/>
</dbReference>
<dbReference type="EMBL" id="CP002688">
    <property type="protein sequence ID" value="AED98243.1"/>
    <property type="molecule type" value="Genomic_DNA"/>
</dbReference>
<dbReference type="EMBL" id="CP002688">
    <property type="protein sequence ID" value="ANM70060.1"/>
    <property type="molecule type" value="Genomic_DNA"/>
</dbReference>
<dbReference type="RefSeq" id="NP_001331697.1">
    <molecule id="Q9LVR6-1"/>
    <property type="nucleotide sequence ID" value="NM_001345795.1"/>
</dbReference>
<dbReference type="RefSeq" id="NP_201465.2">
    <molecule id="Q9LVR6-1"/>
    <property type="nucleotide sequence ID" value="NM_126062.2"/>
</dbReference>
<dbReference type="STRING" id="3702.Q9LVR6"/>
<dbReference type="GlyGen" id="Q9LVR6">
    <property type="glycosylation" value="2 sites"/>
</dbReference>
<dbReference type="iPTMnet" id="Q9LVR6"/>
<dbReference type="PaxDb" id="3702-AT5G66640.2"/>
<dbReference type="ProteomicsDB" id="224677">
    <molecule id="Q9LVR6-1"/>
</dbReference>
<dbReference type="EnsemblPlants" id="AT5G66640.1">
    <molecule id="Q9LVR6-1"/>
    <property type="protein sequence ID" value="AT5G66640.1"/>
    <property type="gene ID" value="AT5G66640"/>
</dbReference>
<dbReference type="EnsemblPlants" id="AT5G66640.7">
    <molecule id="Q9LVR6-1"/>
    <property type="protein sequence ID" value="AT5G66640.7"/>
    <property type="gene ID" value="AT5G66640"/>
</dbReference>
<dbReference type="GeneID" id="836796"/>
<dbReference type="Gramene" id="AT5G66640.1">
    <molecule id="Q9LVR6-1"/>
    <property type="protein sequence ID" value="AT5G66640.1"/>
    <property type="gene ID" value="AT5G66640"/>
</dbReference>
<dbReference type="Gramene" id="AT5G66640.7">
    <molecule id="Q9LVR6-1"/>
    <property type="protein sequence ID" value="AT5G66640.7"/>
    <property type="gene ID" value="AT5G66640"/>
</dbReference>
<dbReference type="KEGG" id="ath:AT5G66640"/>
<dbReference type="Araport" id="AT5G66640"/>
<dbReference type="TAIR" id="AT5G66640">
    <property type="gene designation" value="DAR3"/>
</dbReference>
<dbReference type="eggNOG" id="KOG1703">
    <property type="taxonomic scope" value="Eukaryota"/>
</dbReference>
<dbReference type="HOGENOM" id="CLU_015906_3_0_1"/>
<dbReference type="InParanoid" id="Q9LVR6"/>
<dbReference type="PhylomeDB" id="Q9LVR6"/>
<dbReference type="PRO" id="PR:Q9LVR6"/>
<dbReference type="Proteomes" id="UP000006548">
    <property type="component" value="Chromosome 5"/>
</dbReference>
<dbReference type="ExpressionAtlas" id="Q9LVR6">
    <property type="expression patterns" value="baseline and differential"/>
</dbReference>
<dbReference type="InterPro" id="IPR045218">
    <property type="entry name" value="DA1-like"/>
</dbReference>
<dbReference type="InterPro" id="IPR022087">
    <property type="entry name" value="DA1-like_dom"/>
</dbReference>
<dbReference type="PANTHER" id="PTHR24209">
    <property type="entry name" value="PROTEIN DA1-RELATED 2"/>
    <property type="match status" value="1"/>
</dbReference>
<dbReference type="PANTHER" id="PTHR24209:SF32">
    <property type="entry name" value="PROTEIN DA1-RELATED 3"/>
    <property type="match status" value="1"/>
</dbReference>
<dbReference type="Pfam" id="PF12315">
    <property type="entry name" value="DA1-like"/>
    <property type="match status" value="1"/>
</dbReference>
<dbReference type="PROSITE" id="PS00142">
    <property type="entry name" value="ZINC_PROTEASE"/>
    <property type="match status" value="1"/>
</dbReference>